<gene>
    <name evidence="1" type="primary">yheU</name>
    <name type="ordered locus">E2348C_3604</name>
</gene>
<dbReference type="EMBL" id="FM180568">
    <property type="protein sequence ID" value="CAS11152.1"/>
    <property type="molecule type" value="Genomic_DNA"/>
</dbReference>
<dbReference type="RefSeq" id="WP_000907085.1">
    <property type="nucleotide sequence ID" value="NC_011601.1"/>
</dbReference>
<dbReference type="SMR" id="B7UK65"/>
<dbReference type="KEGG" id="ecg:E2348C_3604"/>
<dbReference type="HOGENOM" id="CLU_186759_1_0_6"/>
<dbReference type="Proteomes" id="UP000008205">
    <property type="component" value="Chromosome"/>
</dbReference>
<dbReference type="Gene3D" id="1.10.10.610">
    <property type="entry name" value="YehU-like"/>
    <property type="match status" value="1"/>
</dbReference>
<dbReference type="HAMAP" id="MF_00690">
    <property type="entry name" value="UPF0270"/>
    <property type="match status" value="1"/>
</dbReference>
<dbReference type="InterPro" id="IPR010648">
    <property type="entry name" value="UPF0270"/>
</dbReference>
<dbReference type="InterPro" id="IPR036685">
    <property type="entry name" value="YehU-like_sf"/>
</dbReference>
<dbReference type="NCBIfam" id="NF003438">
    <property type="entry name" value="PRK04966.1"/>
    <property type="match status" value="1"/>
</dbReference>
<dbReference type="Pfam" id="PF06794">
    <property type="entry name" value="UPF0270"/>
    <property type="match status" value="1"/>
</dbReference>
<dbReference type="PIRSF" id="PIRSF006169">
    <property type="entry name" value="UCP006169"/>
    <property type="match status" value="1"/>
</dbReference>
<dbReference type="SUPFAM" id="SSF118001">
    <property type="entry name" value="YehU-like"/>
    <property type="match status" value="1"/>
</dbReference>
<accession>B7UK65</accession>
<evidence type="ECO:0000255" key="1">
    <source>
        <dbReference type="HAMAP-Rule" id="MF_00690"/>
    </source>
</evidence>
<organism>
    <name type="scientific">Escherichia coli O127:H6 (strain E2348/69 / EPEC)</name>
    <dbReference type="NCBI Taxonomy" id="574521"/>
    <lineage>
        <taxon>Bacteria</taxon>
        <taxon>Pseudomonadati</taxon>
        <taxon>Pseudomonadota</taxon>
        <taxon>Gammaproteobacteria</taxon>
        <taxon>Enterobacterales</taxon>
        <taxon>Enterobacteriaceae</taxon>
        <taxon>Escherichia</taxon>
    </lineage>
</organism>
<keyword id="KW-1185">Reference proteome</keyword>
<feature type="chain" id="PRO_1000147809" description="UPF0270 protein YheU">
    <location>
        <begin position="1"/>
        <end position="72"/>
    </location>
</feature>
<sequence length="72" mass="8470">MLIPWQDLSPETLENLIESFVLREGTDYGEHERTLEQKVADVKRQLQCGEAVLVWSELHETVNIMPRSQFRE</sequence>
<reference key="1">
    <citation type="journal article" date="2009" name="J. Bacteriol.">
        <title>Complete genome sequence and comparative genome analysis of enteropathogenic Escherichia coli O127:H6 strain E2348/69.</title>
        <authorList>
            <person name="Iguchi A."/>
            <person name="Thomson N.R."/>
            <person name="Ogura Y."/>
            <person name="Saunders D."/>
            <person name="Ooka T."/>
            <person name="Henderson I.R."/>
            <person name="Harris D."/>
            <person name="Asadulghani M."/>
            <person name="Kurokawa K."/>
            <person name="Dean P."/>
            <person name="Kenny B."/>
            <person name="Quail M.A."/>
            <person name="Thurston S."/>
            <person name="Dougan G."/>
            <person name="Hayashi T."/>
            <person name="Parkhill J."/>
            <person name="Frankel G."/>
        </authorList>
    </citation>
    <scope>NUCLEOTIDE SEQUENCE [LARGE SCALE GENOMIC DNA]</scope>
    <source>
        <strain>E2348/69 / EPEC</strain>
    </source>
</reference>
<name>YHEU_ECO27</name>
<protein>
    <recommendedName>
        <fullName evidence="1">UPF0270 protein YheU</fullName>
    </recommendedName>
</protein>
<comment type="similarity">
    <text evidence="1">Belongs to the UPF0270 family.</text>
</comment>
<proteinExistence type="inferred from homology"/>